<sequence>MTSVMSHEFQLATAETWPNPWPMYRALRDHDPVHHVVPPQRPEYDYYVLSRHADVWSAARDHQTFSSAQGLTVNYGELEMIGLHDTPPMVMQDPPVHTEFRKLVSRGFTPRQVETVEPTVRKFVVERLEKLRANGGGDIVTELFKPLPSMVVAHYLGVPEEDWTQFDGWTQAIVAANAVDGATTGALDAVGSMMAYFTGLIERRRTEPADDAISHLVAAGVGADGDTAGTLSILAFTFTMVTGGNDTVTGMLGGSMPLLHRRPDQRRLLLDDPEGIPDAVEELLRLTSPVQGLARTTTRDVTIGDTTIPAGRRVLLLYGSANRDERQYGPDAAELDVTRCPRNILTFSHGAHHCLGAAAARMQCRVALTELLARCPDFEVAESRIVWSGGSYVRRPLSVPFRVTS</sequence>
<evidence type="ECO:0000269" key="1">
    <source>
    </source>
</evidence>
<evidence type="ECO:0000269" key="2">
    <source>
    </source>
</evidence>
<evidence type="ECO:0000305" key="3"/>
<evidence type="ECO:0007829" key="4">
    <source>
        <dbReference type="PDB" id="2UUQ"/>
    </source>
</evidence>
<comment type="cofactor">
    <cofactor>
        <name>heme</name>
        <dbReference type="ChEBI" id="CHEBI:30413"/>
    </cofactor>
</comment>
<comment type="activity regulation">
    <text evidence="1 2">Inhibited by azole drugs.</text>
</comment>
<comment type="subunit">
    <text evidence="1 2">Homodimer.</text>
</comment>
<comment type="similarity">
    <text evidence="3">Belongs to the cytochrome P450 family.</text>
</comment>
<accession>P9WPN5</accession>
<accession>L0T6B9</accession>
<accession>Q11062</accession>
<reference key="1">
    <citation type="journal article" date="1998" name="Nature">
        <title>Deciphering the biology of Mycobacterium tuberculosis from the complete genome sequence.</title>
        <authorList>
            <person name="Cole S.T."/>
            <person name="Brosch R."/>
            <person name="Parkhill J."/>
            <person name="Garnier T."/>
            <person name="Churcher C.M."/>
            <person name="Harris D.E."/>
            <person name="Gordon S.V."/>
            <person name="Eiglmeier K."/>
            <person name="Gas S."/>
            <person name="Barry C.E. III"/>
            <person name="Tekaia F."/>
            <person name="Badcock K."/>
            <person name="Basham D."/>
            <person name="Brown D."/>
            <person name="Chillingworth T."/>
            <person name="Connor R."/>
            <person name="Davies R.M."/>
            <person name="Devlin K."/>
            <person name="Feltwell T."/>
            <person name="Gentles S."/>
            <person name="Hamlin N."/>
            <person name="Holroyd S."/>
            <person name="Hornsby T."/>
            <person name="Jagels K."/>
            <person name="Krogh A."/>
            <person name="McLean J."/>
            <person name="Moule S."/>
            <person name="Murphy L.D."/>
            <person name="Oliver S."/>
            <person name="Osborne J."/>
            <person name="Quail M.A."/>
            <person name="Rajandream M.A."/>
            <person name="Rogers J."/>
            <person name="Rutter S."/>
            <person name="Seeger K."/>
            <person name="Skelton S."/>
            <person name="Squares S."/>
            <person name="Squares R."/>
            <person name="Sulston J.E."/>
            <person name="Taylor K."/>
            <person name="Whitehead S."/>
            <person name="Barrell B.G."/>
        </authorList>
    </citation>
    <scope>NUCLEOTIDE SEQUENCE [LARGE SCALE GENOMIC DNA]</scope>
    <source>
        <strain>ATCC 25618 / H37Rv</strain>
    </source>
</reference>
<reference key="2">
    <citation type="journal article" date="2011" name="Mol. Cell. Proteomics">
        <title>Proteogenomic analysis of Mycobacterium tuberculosis by high resolution mass spectrometry.</title>
        <authorList>
            <person name="Kelkar D.S."/>
            <person name="Kumar D."/>
            <person name="Kumar P."/>
            <person name="Balakrishnan L."/>
            <person name="Muthusamy B."/>
            <person name="Yadav A.K."/>
            <person name="Shrivastava P."/>
            <person name="Marimuthu A."/>
            <person name="Anand S."/>
            <person name="Sundaram H."/>
            <person name="Kingsbury R."/>
            <person name="Harsha H.C."/>
            <person name="Nair B."/>
            <person name="Prasad T.S."/>
            <person name="Chauhan D.S."/>
            <person name="Katoch K."/>
            <person name="Katoch V.M."/>
            <person name="Kumar P."/>
            <person name="Chaerkady R."/>
            <person name="Ramachandran S."/>
            <person name="Dash D."/>
            <person name="Pandey A."/>
        </authorList>
    </citation>
    <scope>IDENTIFICATION BY MASS SPECTROMETRY [LARGE SCALE ANALYSIS]</scope>
    <source>
        <strain>ATCC 25618 / H37Rv</strain>
    </source>
</reference>
<reference key="3">
    <citation type="journal article" date="2008" name="J. Biol. Chem.">
        <title>Mycobacterium tuberculosis CYP130: crystal structure, biophysical characterization, and interactions with antifungal azole drugs.</title>
        <authorList>
            <person name="Ouellet H."/>
            <person name="Podust L.M."/>
            <person name="de Montellano P.R."/>
        </authorList>
    </citation>
    <scope>X-RAY CRYSTALLOGRAPHY (1.46 ANGSTROMS) IN COMPLEX WITH HEME AND SUBSTRATE ANALOGS</scope>
    <scope>ACTIVITY REGULATION</scope>
    <scope>SUBUNIT</scope>
</reference>
<reference key="4">
    <citation type="journal article" date="2009" name="J. Biol. Chem.">
        <title>Interaction of Mycobacterium tuberculosis CYP130 with heterocyclic arylamines.</title>
        <authorList>
            <person name="Podust L.M."/>
            <person name="Ouellet H."/>
            <person name="von Kries J.P."/>
            <person name="de Montellano P.R."/>
        </authorList>
    </citation>
    <scope>X-RAY CRYSTALLOGRAPHY (1.5 ANGSTROMS) OF 2-405 IN COMPLEX WITH HEME AND SUBSTRATE ANALOGS AND OF MUTANT ALA-243</scope>
    <scope>MUTAGENESIS OF GLY-243</scope>
    <scope>ACTIVITY REGULATION</scope>
    <scope>SUBUNIT</scope>
</reference>
<protein>
    <recommendedName>
        <fullName>Cytochrome P450 130</fullName>
        <ecNumber>1.14.-.-</ecNumber>
    </recommendedName>
</protein>
<feature type="chain" id="PRO_0000052285" description="Cytochrome P450 130">
    <location>
        <begin position="1"/>
        <end position="405"/>
    </location>
</feature>
<feature type="binding site">
    <location>
        <position position="93"/>
    </location>
    <ligand>
        <name>substrate</name>
    </ligand>
</feature>
<feature type="binding site">
    <location>
        <position position="97"/>
    </location>
    <ligand>
        <name>substrate</name>
    </ligand>
</feature>
<feature type="binding site" evidence="1 2">
    <location>
        <position position="101"/>
    </location>
    <ligand>
        <name>heme</name>
        <dbReference type="ChEBI" id="CHEBI:30413"/>
    </ligand>
</feature>
<feature type="binding site" evidence="1 2">
    <location>
        <position position="243"/>
    </location>
    <ligand>
        <name>heme</name>
        <dbReference type="ChEBI" id="CHEBI:30413"/>
    </ligand>
</feature>
<feature type="binding site" evidence="1 2">
    <location>
        <position position="295"/>
    </location>
    <ligand>
        <name>heme</name>
        <dbReference type="ChEBI" id="CHEBI:30413"/>
    </ligand>
</feature>
<feature type="binding site" evidence="1 2">
    <location>
        <position position="318"/>
    </location>
    <ligand>
        <name>heme</name>
        <dbReference type="ChEBI" id="CHEBI:30413"/>
    </ligand>
</feature>
<feature type="binding site" evidence="1 2">
    <location>
        <position position="348"/>
    </location>
    <ligand>
        <name>heme</name>
        <dbReference type="ChEBI" id="CHEBI:30413"/>
    </ligand>
</feature>
<feature type="binding site" evidence="1 2">
    <location>
        <position position="352"/>
    </location>
    <ligand>
        <name>heme</name>
        <dbReference type="ChEBI" id="CHEBI:30413"/>
    </ligand>
</feature>
<feature type="binding site" description="axial binding residue">
    <location>
        <position position="354"/>
    </location>
    <ligand>
        <name>heme</name>
        <dbReference type="ChEBI" id="CHEBI:30413"/>
    </ligand>
    <ligandPart>
        <name>Fe</name>
        <dbReference type="ChEBI" id="CHEBI:18248"/>
    </ligandPart>
</feature>
<feature type="mutagenesis site" description="The binding mode of azoles and some arylamines are reverted from type II to type I because of hydrophobic and steric interactions with the alanine side chain." evidence="2">
    <original>G</original>
    <variation>A</variation>
    <location>
        <position position="243"/>
    </location>
</feature>
<feature type="turn" evidence="4">
    <location>
        <begin position="14"/>
        <end position="18"/>
    </location>
</feature>
<feature type="helix" evidence="4">
    <location>
        <begin position="21"/>
        <end position="30"/>
    </location>
</feature>
<feature type="strand" evidence="4">
    <location>
        <begin position="32"/>
        <end position="36"/>
    </location>
</feature>
<feature type="helix" evidence="4">
    <location>
        <begin position="42"/>
        <end position="44"/>
    </location>
</feature>
<feature type="strand" evidence="4">
    <location>
        <begin position="46"/>
        <end position="49"/>
    </location>
</feature>
<feature type="helix" evidence="4">
    <location>
        <begin position="52"/>
        <end position="60"/>
    </location>
</feature>
<feature type="turn" evidence="4">
    <location>
        <begin position="62"/>
        <end position="64"/>
    </location>
</feature>
<feature type="strand" evidence="4">
    <location>
        <begin position="65"/>
        <end position="67"/>
    </location>
</feature>
<feature type="strand" evidence="4">
    <location>
        <begin position="71"/>
        <end position="73"/>
    </location>
</feature>
<feature type="helix" evidence="4">
    <location>
        <begin position="77"/>
        <end position="81"/>
    </location>
</feature>
<feature type="strand" evidence="4">
    <location>
        <begin position="84"/>
        <end position="86"/>
    </location>
</feature>
<feature type="helix" evidence="4">
    <location>
        <begin position="89"/>
        <end position="91"/>
    </location>
</feature>
<feature type="helix" evidence="4">
    <location>
        <begin position="96"/>
        <end position="105"/>
    </location>
</feature>
<feature type="helix" evidence="4">
    <location>
        <begin position="110"/>
        <end position="133"/>
    </location>
</feature>
<feature type="strand" evidence="4">
    <location>
        <begin position="136"/>
        <end position="138"/>
    </location>
</feature>
<feature type="helix" evidence="4">
    <location>
        <begin position="139"/>
        <end position="142"/>
    </location>
</feature>
<feature type="turn" evidence="4">
    <location>
        <begin position="143"/>
        <end position="145"/>
    </location>
</feature>
<feature type="helix" evidence="4">
    <location>
        <begin position="146"/>
        <end position="155"/>
    </location>
</feature>
<feature type="helix" evidence="4">
    <location>
        <begin position="160"/>
        <end position="162"/>
    </location>
</feature>
<feature type="helix" evidence="4">
    <location>
        <begin position="163"/>
        <end position="178"/>
    </location>
</feature>
<feature type="helix" evidence="4">
    <location>
        <begin position="187"/>
        <end position="204"/>
    </location>
</feature>
<feature type="helix" evidence="4">
    <location>
        <begin position="212"/>
        <end position="218"/>
    </location>
</feature>
<feature type="turn" evidence="4">
    <location>
        <begin position="219"/>
        <end position="222"/>
    </location>
</feature>
<feature type="helix" evidence="4">
    <location>
        <begin position="227"/>
        <end position="244"/>
    </location>
</feature>
<feature type="helix" evidence="4">
    <location>
        <begin position="246"/>
        <end position="260"/>
    </location>
</feature>
<feature type="helix" evidence="4">
    <location>
        <begin position="263"/>
        <end position="271"/>
    </location>
</feature>
<feature type="helix" evidence="4">
    <location>
        <begin position="273"/>
        <end position="275"/>
    </location>
</feature>
<feature type="helix" evidence="4">
    <location>
        <begin position="276"/>
        <end position="287"/>
    </location>
</feature>
<feature type="strand" evidence="4">
    <location>
        <begin position="293"/>
        <end position="299"/>
    </location>
</feature>
<feature type="strand" evidence="4">
    <location>
        <begin position="301"/>
        <end position="303"/>
    </location>
</feature>
<feature type="strand" evidence="4">
    <location>
        <begin position="306"/>
        <end position="308"/>
    </location>
</feature>
<feature type="strand" evidence="4">
    <location>
        <begin position="313"/>
        <end position="316"/>
    </location>
</feature>
<feature type="helix" evidence="4">
    <location>
        <begin position="318"/>
        <end position="321"/>
    </location>
</feature>
<feature type="helix" evidence="4">
    <location>
        <begin position="325"/>
        <end position="328"/>
    </location>
</feature>
<feature type="turn" evidence="4">
    <location>
        <begin position="330"/>
        <end position="333"/>
    </location>
</feature>
<feature type="helix" evidence="4">
    <location>
        <begin position="357"/>
        <end position="374"/>
    </location>
</feature>
<feature type="strand" evidence="4">
    <location>
        <begin position="377"/>
        <end position="380"/>
    </location>
</feature>
<feature type="helix" evidence="4">
    <location>
        <begin position="382"/>
        <end position="384"/>
    </location>
</feature>
<feature type="strand" evidence="4">
    <location>
        <begin position="391"/>
        <end position="393"/>
    </location>
</feature>
<feature type="strand" evidence="4">
    <location>
        <begin position="396"/>
        <end position="398"/>
    </location>
</feature>
<feature type="strand" evidence="4">
    <location>
        <begin position="400"/>
        <end position="403"/>
    </location>
</feature>
<organism>
    <name type="scientific">Mycobacterium tuberculosis (strain ATCC 25618 / H37Rv)</name>
    <dbReference type="NCBI Taxonomy" id="83332"/>
    <lineage>
        <taxon>Bacteria</taxon>
        <taxon>Bacillati</taxon>
        <taxon>Actinomycetota</taxon>
        <taxon>Actinomycetes</taxon>
        <taxon>Mycobacteriales</taxon>
        <taxon>Mycobacteriaceae</taxon>
        <taxon>Mycobacterium</taxon>
        <taxon>Mycobacterium tuberculosis complex</taxon>
    </lineage>
</organism>
<proteinExistence type="evidence at protein level"/>
<dbReference type="EC" id="1.14.-.-"/>
<dbReference type="EMBL" id="AL123456">
    <property type="protein sequence ID" value="CCP44012.1"/>
    <property type="molecule type" value="Genomic_DNA"/>
</dbReference>
<dbReference type="PIR" id="H70752">
    <property type="entry name" value="H70752"/>
</dbReference>
<dbReference type="RefSeq" id="NP_215772.1">
    <property type="nucleotide sequence ID" value="NC_000962.3"/>
</dbReference>
<dbReference type="RefSeq" id="WP_003406352.1">
    <property type="nucleotide sequence ID" value="NZ_NVQJ01000049.1"/>
</dbReference>
<dbReference type="PDB" id="2UUQ">
    <property type="method" value="X-ray"/>
    <property type="resolution" value="1.46 A"/>
    <property type="chains" value="A=1-405"/>
</dbReference>
<dbReference type="PDB" id="2UVN">
    <property type="method" value="X-ray"/>
    <property type="resolution" value="3.00 A"/>
    <property type="chains" value="A/B=1-405"/>
</dbReference>
<dbReference type="PDB" id="2WGY">
    <property type="method" value="X-ray"/>
    <property type="resolution" value="1.50 A"/>
    <property type="chains" value="A=2-405"/>
</dbReference>
<dbReference type="PDB" id="2WH8">
    <property type="method" value="X-ray"/>
    <property type="resolution" value="1.70 A"/>
    <property type="chains" value="A/B/C/D=2-405"/>
</dbReference>
<dbReference type="PDB" id="2WHF">
    <property type="method" value="X-ray"/>
    <property type="resolution" value="1.58 A"/>
    <property type="chains" value="A=2-405"/>
</dbReference>
<dbReference type="PDBsum" id="2UUQ"/>
<dbReference type="PDBsum" id="2UVN"/>
<dbReference type="PDBsum" id="2WGY"/>
<dbReference type="PDBsum" id="2WH8"/>
<dbReference type="PDBsum" id="2WHF"/>
<dbReference type="SMR" id="P9WPN5"/>
<dbReference type="FunCoup" id="P9WPN5">
    <property type="interactions" value="11"/>
</dbReference>
<dbReference type="STRING" id="83332.Rv1256c"/>
<dbReference type="BindingDB" id="P9WPN5"/>
<dbReference type="ChEMBL" id="CHEMBL5357"/>
<dbReference type="DrugBank" id="DB07705">
    <property type="generic name" value="(S)-econazole"/>
</dbReference>
<dbReference type="DrugBank" id="DB07972">
    <property type="generic name" value="1-(3-METHYLPHENYL)-1H-BENZIMIDAZOL-5-AMINE"/>
</dbReference>
<dbReference type="DrugBank" id="DB07971">
    <property type="generic name" value="5-AMINO-2-{4-[(4-AMINOPHENYL)SULFANYL]PHENYL}-1H-ISOINDOLE-1,3(2H)-DIONE"/>
</dbReference>
<dbReference type="DrugCentral" id="P9WPN5"/>
<dbReference type="PaxDb" id="83332-Rv1256c"/>
<dbReference type="DNASU" id="887059"/>
<dbReference type="GeneID" id="45425226"/>
<dbReference type="GeneID" id="887059"/>
<dbReference type="KEGG" id="mtu:Rv1256c"/>
<dbReference type="KEGG" id="mtv:RVBD_1256c"/>
<dbReference type="TubercuList" id="Rv1256c"/>
<dbReference type="eggNOG" id="COG2124">
    <property type="taxonomic scope" value="Bacteria"/>
</dbReference>
<dbReference type="InParanoid" id="P9WPN5"/>
<dbReference type="OrthoDB" id="3213397at2"/>
<dbReference type="PhylomeDB" id="P9WPN5"/>
<dbReference type="EvolutionaryTrace" id="P9WPN5"/>
<dbReference type="PRO" id="PR:P9WPN5"/>
<dbReference type="Proteomes" id="UP000001584">
    <property type="component" value="Chromosome"/>
</dbReference>
<dbReference type="GO" id="GO:0009274">
    <property type="term" value="C:peptidoglycan-based cell wall"/>
    <property type="evidence" value="ECO:0007005"/>
    <property type="project" value="MTBBASE"/>
</dbReference>
<dbReference type="GO" id="GO:0036199">
    <property type="term" value="F:cholest-4-en-3-one 26-monooxygenase activity"/>
    <property type="evidence" value="ECO:0000318"/>
    <property type="project" value="GO_Central"/>
</dbReference>
<dbReference type="GO" id="GO:0020037">
    <property type="term" value="F:heme binding"/>
    <property type="evidence" value="ECO:0000314"/>
    <property type="project" value="MTBBASE"/>
</dbReference>
<dbReference type="GO" id="GO:0005506">
    <property type="term" value="F:iron ion binding"/>
    <property type="evidence" value="ECO:0007669"/>
    <property type="project" value="InterPro"/>
</dbReference>
<dbReference type="GO" id="GO:0008395">
    <property type="term" value="F:steroid hydroxylase activity"/>
    <property type="evidence" value="ECO:0000318"/>
    <property type="project" value="GO_Central"/>
</dbReference>
<dbReference type="GO" id="GO:0006707">
    <property type="term" value="P:cholesterol catabolic process"/>
    <property type="evidence" value="ECO:0000318"/>
    <property type="project" value="GO_Central"/>
</dbReference>
<dbReference type="CDD" id="cd11078">
    <property type="entry name" value="CYP130-like"/>
    <property type="match status" value="1"/>
</dbReference>
<dbReference type="FunFam" id="1.10.630.10:FF:000018">
    <property type="entry name" value="Cytochrome P450 monooxygenase"/>
    <property type="match status" value="1"/>
</dbReference>
<dbReference type="Gene3D" id="1.10.630.10">
    <property type="entry name" value="Cytochrome P450"/>
    <property type="match status" value="1"/>
</dbReference>
<dbReference type="InterPro" id="IPR001128">
    <property type="entry name" value="Cyt_P450"/>
</dbReference>
<dbReference type="InterPro" id="IPR002397">
    <property type="entry name" value="Cyt_P450_B"/>
</dbReference>
<dbReference type="InterPro" id="IPR017972">
    <property type="entry name" value="Cyt_P450_CS"/>
</dbReference>
<dbReference type="InterPro" id="IPR036396">
    <property type="entry name" value="Cyt_P450_sf"/>
</dbReference>
<dbReference type="PANTHER" id="PTHR46696:SF4">
    <property type="entry name" value="BIOTIN BIOSYNTHESIS CYTOCHROME P450"/>
    <property type="match status" value="1"/>
</dbReference>
<dbReference type="PANTHER" id="PTHR46696">
    <property type="entry name" value="P450, PUTATIVE (EUROFUNG)-RELATED"/>
    <property type="match status" value="1"/>
</dbReference>
<dbReference type="Pfam" id="PF00067">
    <property type="entry name" value="p450"/>
    <property type="match status" value="1"/>
</dbReference>
<dbReference type="PRINTS" id="PR00359">
    <property type="entry name" value="BP450"/>
</dbReference>
<dbReference type="SUPFAM" id="SSF48264">
    <property type="entry name" value="Cytochrome P450"/>
    <property type="match status" value="1"/>
</dbReference>
<dbReference type="PROSITE" id="PS00086">
    <property type="entry name" value="CYTOCHROME_P450"/>
    <property type="match status" value="1"/>
</dbReference>
<name>CP130_MYCTU</name>
<keyword id="KW-0002">3D-structure</keyword>
<keyword id="KW-0349">Heme</keyword>
<keyword id="KW-0408">Iron</keyword>
<keyword id="KW-0479">Metal-binding</keyword>
<keyword id="KW-0503">Monooxygenase</keyword>
<keyword id="KW-0560">Oxidoreductase</keyword>
<keyword id="KW-1185">Reference proteome</keyword>
<gene>
    <name type="primary">cyp130</name>
    <name type="ordered locus">Rv1256c</name>
    <name type="ORF">MTCY50.26</name>
</gene>